<comment type="function">
    <text evidence="2">Forms a proton-selective ion channel that is necessary for the efficient release of the viral genome during virus entry. After attaching to the cell surface, the virion enters the cell by endocytosis. Acidification of the endosome triggers M2 ion channel activity. The influx of protons into virion interior is believed to disrupt interactions between the viral ribonucleoprotein (RNP), matrix protein 1 (M1), and lipid bilayers, thereby freeing the viral genome from interaction with viral proteins and enabling RNA segments to migrate to the host cell nucleus, where influenza virus RNA transcription and replication occur. Also plays a role in viral proteins secretory pathway. Elevates the intravesicular pH of normally acidic compartments, such as trans-Golgi network, preventing newly formed hemagglutinin from premature switching to the fusion-active conformation.</text>
</comment>
<comment type="activity regulation">
    <text>The M2 protein from most influenza A strains is inhibited by amantadine and rimantadine, resulting in viral uncoating incapacity. Emergence of amantadine-resistant variants is usually rapid.</text>
</comment>
<comment type="subunit">
    <text evidence="2">Homotetramer; composed of two disulfide-linked dimers held together by non-covalent interactions. May interact with matrix protein 1.</text>
</comment>
<comment type="interaction">
    <interactant intactId="EBI-2548903">
        <id>P0DOF5</id>
    </interactant>
    <interactant intactId="EBI-2548903">
        <id>P0DOF5</id>
        <label>M</label>
    </interactant>
    <organismsDiffer>false</organismsDiffer>
    <experiments>3</experiments>
</comment>
<comment type="subcellular location">
    <subcellularLocation>
        <location evidence="2">Virion membrane</location>
    </subcellularLocation>
    <subcellularLocation>
        <location evidence="2">Host apical cell membrane</location>
        <topology evidence="2">Single-pass type III membrane protein</topology>
    </subcellularLocation>
    <text evidence="2">Abundantly expressed at the apical plasma membrane in infected polarized epithelial cells, in close proximity to budding and assembled virions. Minor component of virions (only 16-20 molecules/virion).</text>
</comment>
<comment type="alternative products">
    <event type="alternative splicing"/>
    <isoform>
        <id>P0DOF5-1</id>
        <id>P03490-1</id>
        <id>P63231-1</id>
        <name>M2</name>
        <sequence type="displayed"/>
    </isoform>
    <isoform>
        <id>P0DOF4-1</id>
        <id>P03486-1</id>
        <id>P63233-1</id>
        <name>M1</name>
        <sequence type="external"/>
    </isoform>
    <text>Only the first 9 residues are shared by the 2 isoforms.</text>
</comment>
<comment type="domain">
    <text evidence="2">Cytoplasmic tail plays an important role in virion assembly and morphogenesis.</text>
</comment>
<comment type="miscellaneous">
    <text>Strain A/Udorn/307/72 is a laboratory-adapted strain.</text>
</comment>
<comment type="miscellaneous">
    <text evidence="2">When the channel is activated, one or more imidazole moieties of His-37 probably become bi-protonated.</text>
</comment>
<comment type="similarity">
    <text evidence="2">Belongs to the influenza viruses matrix protein M2 family.</text>
</comment>
<organism>
    <name type="scientific">Influenza A virus (strain A/Udorn/307/1972 H3N2)</name>
    <dbReference type="NCBI Taxonomy" id="381517"/>
    <lineage>
        <taxon>Viruses</taxon>
        <taxon>Riboviria</taxon>
        <taxon>Orthornavirae</taxon>
        <taxon>Negarnaviricota</taxon>
        <taxon>Polyploviricotina</taxon>
        <taxon>Insthoviricetes</taxon>
        <taxon>Articulavirales</taxon>
        <taxon>Orthomyxoviridae</taxon>
        <taxon>Alphainfluenzavirus</taxon>
        <taxon>Alphainfluenzavirus influenzae</taxon>
        <taxon>Influenza A virus</taxon>
    </lineage>
</organism>
<protein>
    <recommendedName>
        <fullName evidence="2">Matrix protein 2</fullName>
    </recommendedName>
    <alternativeName>
        <fullName evidence="2">Proton channel protein M2</fullName>
    </alternativeName>
</protein>
<organismHost>
    <name type="scientific">Aves</name>
    <dbReference type="NCBI Taxonomy" id="8782"/>
</organismHost>
<organismHost>
    <name type="scientific">Cetacea</name>
    <name type="common">whales</name>
    <dbReference type="NCBI Taxonomy" id="9721"/>
</organismHost>
<organismHost>
    <name type="scientific">Homo sapiens</name>
    <name type="common">Human</name>
    <dbReference type="NCBI Taxonomy" id="9606"/>
</organismHost>
<organismHost>
    <name type="scientific">Phocidae</name>
    <name type="common">true seals</name>
    <dbReference type="NCBI Taxonomy" id="9709"/>
</organismHost>
<organismHost>
    <name type="scientific">Sus scrofa</name>
    <name type="common">Pig</name>
    <dbReference type="NCBI Taxonomy" id="9823"/>
</organismHost>
<accession>P0DOF5</accession>
<accession>P03490</accession>
<accession>P63231</accession>
<accession>Q1K9D8</accession>
<dbReference type="EMBL" id="DQ508932">
    <property type="protein sequence ID" value="ABF21323.1"/>
    <property type="molecule type" value="Genomic_RNA"/>
</dbReference>
<dbReference type="PDB" id="1MP6">
    <property type="method" value="NMR"/>
    <property type="chains" value="A=22-46"/>
</dbReference>
<dbReference type="PDB" id="2KIH">
    <property type="method" value="NMR"/>
    <property type="chains" value="A/B/C/D=18-60"/>
</dbReference>
<dbReference type="PDB" id="2KWX">
    <property type="method" value="NMR"/>
    <property type="chains" value="A/B/C/D=23-60"/>
</dbReference>
<dbReference type="PDB" id="2L0J">
    <property type="method" value="NMR"/>
    <property type="chains" value="A/B/C/D=22-62"/>
</dbReference>
<dbReference type="PDB" id="2N70">
    <property type="method" value="NMR"/>
    <property type="chains" value="A/B/C/D=18-60"/>
</dbReference>
<dbReference type="PDB" id="2RLF">
    <property type="method" value="NMR"/>
    <property type="chains" value="A/B/C/D=18-60"/>
</dbReference>
<dbReference type="PDB" id="4QK7">
    <property type="method" value="X-ray"/>
    <property type="resolution" value="1.10 A"/>
    <property type="chains" value="A=22-46"/>
</dbReference>
<dbReference type="PDB" id="4QKC">
    <property type="method" value="X-ray"/>
    <property type="resolution" value="1.10 A"/>
    <property type="chains" value="A=22-46"/>
</dbReference>
<dbReference type="PDB" id="4QKL">
    <property type="method" value="X-ray"/>
    <property type="resolution" value="1.71 A"/>
    <property type="chains" value="A=22-46"/>
</dbReference>
<dbReference type="PDB" id="4QKM">
    <property type="method" value="X-ray"/>
    <property type="resolution" value="1.44 A"/>
    <property type="chains" value="A=22-46"/>
</dbReference>
<dbReference type="PDB" id="5C02">
    <property type="method" value="X-ray"/>
    <property type="resolution" value="1.59 A"/>
    <property type="chains" value="A=22-46"/>
</dbReference>
<dbReference type="PDB" id="8H3C">
    <property type="method" value="X-ray"/>
    <property type="resolution" value="3.43 A"/>
    <property type="chains" value="F/G=2-16"/>
</dbReference>
<dbReference type="PDBsum" id="1MP6"/>
<dbReference type="PDBsum" id="2KIH"/>
<dbReference type="PDBsum" id="2KWX"/>
<dbReference type="PDBsum" id="2L0J"/>
<dbReference type="PDBsum" id="2N70"/>
<dbReference type="PDBsum" id="2RLF"/>
<dbReference type="PDBsum" id="4QK7"/>
<dbReference type="PDBsum" id="4QKC"/>
<dbReference type="PDBsum" id="4QKL"/>
<dbReference type="PDBsum" id="4QKM"/>
<dbReference type="PDBsum" id="5C02"/>
<dbReference type="PDBsum" id="8H3C"/>
<dbReference type="SMR" id="P0DOF5"/>
<dbReference type="IntAct" id="P0DOF5">
    <property type="interactions" value="6"/>
</dbReference>
<dbReference type="BindingDB" id="P0DOF5"/>
<dbReference type="GlyCosmos" id="P0DOF5">
    <property type="glycosylation" value="1 site, No reported glycans"/>
</dbReference>
<dbReference type="EvolutionaryTrace" id="P0DOF5"/>
<dbReference type="Proteomes" id="UP000153055">
    <property type="component" value="Genome"/>
</dbReference>
<dbReference type="GO" id="GO:0020002">
    <property type="term" value="C:host cell plasma membrane"/>
    <property type="evidence" value="ECO:0007669"/>
    <property type="project" value="UniProtKB-SubCell"/>
</dbReference>
<dbReference type="GO" id="GO:0016020">
    <property type="term" value="C:membrane"/>
    <property type="evidence" value="ECO:0007669"/>
    <property type="project" value="UniProtKB-UniRule"/>
</dbReference>
<dbReference type="GO" id="GO:0055036">
    <property type="term" value="C:virion membrane"/>
    <property type="evidence" value="ECO:0007669"/>
    <property type="project" value="UniProtKB-SubCell"/>
</dbReference>
<dbReference type="GO" id="GO:0042802">
    <property type="term" value="F:identical protein binding"/>
    <property type="evidence" value="ECO:0000353"/>
    <property type="project" value="IntAct"/>
</dbReference>
<dbReference type="GO" id="GO:0005216">
    <property type="term" value="F:monoatomic ion channel activity"/>
    <property type="evidence" value="ECO:0007669"/>
    <property type="project" value="UniProtKB-UniRule"/>
</dbReference>
<dbReference type="GO" id="GO:0015078">
    <property type="term" value="F:proton transmembrane transporter activity"/>
    <property type="evidence" value="ECO:0007669"/>
    <property type="project" value="UniProtKB-UniRule"/>
</dbReference>
<dbReference type="GO" id="GO:0051259">
    <property type="term" value="P:protein complex oligomerization"/>
    <property type="evidence" value="ECO:0007669"/>
    <property type="project" value="UniProtKB-UniRule"/>
</dbReference>
<dbReference type="GO" id="GO:0044694">
    <property type="term" value="P:symbiont genome entry into host cell via pore formation in plasma membrane"/>
    <property type="evidence" value="ECO:0007669"/>
    <property type="project" value="UniProtKB-UniRule"/>
</dbReference>
<dbReference type="GO" id="GO:0140321">
    <property type="term" value="P:symbiont-mediated suppression of host autophagy"/>
    <property type="evidence" value="ECO:0007669"/>
    <property type="project" value="UniProtKB-KW"/>
</dbReference>
<dbReference type="Gene3D" id="6.10.250.1640">
    <property type="match status" value="1"/>
</dbReference>
<dbReference type="HAMAP" id="MF_04069">
    <property type="entry name" value="INFV_M2"/>
    <property type="match status" value="1"/>
</dbReference>
<dbReference type="InterPro" id="IPR002089">
    <property type="entry name" value="Flu_M2"/>
</dbReference>
<dbReference type="Pfam" id="PF00599">
    <property type="entry name" value="Flu_M2"/>
    <property type="match status" value="1"/>
</dbReference>
<proteinExistence type="evidence at protein level"/>
<gene>
    <name evidence="2" type="primary">M</name>
</gene>
<keyword id="KW-0002">3D-structure</keyword>
<keyword id="KW-0025">Alternative splicing</keyword>
<keyword id="KW-1015">Disulfide bond</keyword>
<keyword id="KW-0325">Glycoprotein</keyword>
<keyword id="KW-1032">Host cell membrane</keyword>
<keyword id="KW-1043">Host membrane</keyword>
<keyword id="KW-0945">Host-virus interaction</keyword>
<keyword id="KW-0375">Hydrogen ion transport</keyword>
<keyword id="KW-1083">Inhibition of host autophagy by virus</keyword>
<keyword id="KW-0407">Ion channel</keyword>
<keyword id="KW-0406">Ion transport</keyword>
<keyword id="KW-0449">Lipoprotein</keyword>
<keyword id="KW-0472">Membrane</keyword>
<keyword id="KW-0564">Palmitate</keyword>
<keyword id="KW-0597">Phosphoprotein</keyword>
<keyword id="KW-0735">Signal-anchor</keyword>
<keyword id="KW-0812">Transmembrane</keyword>
<keyword id="KW-1133">Transmembrane helix</keyword>
<keyword id="KW-0813">Transport</keyword>
<keyword id="KW-1182">Viral ion channel</keyword>
<keyword id="KW-0946">Virion</keyword>
<reference key="1">
    <citation type="submission" date="2006-04" db="EMBL/GenBank/DDBJ databases">
        <title>Complete genome sequencing and analysis of selected influenza virus vaccine strains spanning six decades (1933-1999).</title>
        <authorList>
            <person name="Mbawuike I.N."/>
            <person name="Zhang Y."/>
            <person name="Yamada R.E."/>
            <person name="Nino D."/>
            <person name="Bui H.-H."/>
            <person name="Sette A."/>
            <person name="Couch R.B."/>
        </authorList>
    </citation>
    <scope>NUCLEOTIDE SEQUENCE [GENOMIC RNA]</scope>
</reference>
<reference key="2">
    <citation type="journal article" date="2003" name="FEBS Lett.">
        <title>Proton conduction through the M2 protein of the influenza A virus; a quantitative, mechanistic analysis of experimental data.</title>
        <authorList>
            <person name="Lear J.D."/>
        </authorList>
    </citation>
    <scope>REVIEW</scope>
</reference>
<reference key="3">
    <citation type="journal article" date="2003" name="FEBS Lett.">
        <title>Computational studies of proton transport through the M2 channel.</title>
        <authorList>
            <person name="Wu Y."/>
            <person name="Voth G.A."/>
        </authorList>
    </citation>
    <scope>REVIEW</scope>
</reference>
<reference key="4">
    <citation type="journal article" date="2004" name="Virus Res.">
        <title>Assembly and budding of influenza virus.</title>
        <authorList>
            <person name="Nayak D.P."/>
            <person name="Hui E.K."/>
            <person name="Barman S."/>
        </authorList>
    </citation>
    <scope>REVIEW</scope>
</reference>
<reference key="5">
    <citation type="journal article" date="2000" name="J. Mol. Biol.">
        <title>Helix tilt of the M2 transmembrane peptide from influenza A virus: an intrinsic property.</title>
        <authorList>
            <person name="Kovacs F.A."/>
            <person name="Denny J.K."/>
            <person name="Song Z."/>
            <person name="Quine J.R."/>
            <person name="Cross T.A."/>
        </authorList>
    </citation>
    <scope>STRUCTURE BY NMR OF 22-46</scope>
</reference>
<feature type="chain" id="PRO_0000439956" description="Matrix protein 2">
    <location>
        <begin position="1"/>
        <end position="97"/>
    </location>
</feature>
<feature type="topological domain" description="Virion surface" evidence="2">
    <location>
        <begin position="1"/>
        <end position="22"/>
    </location>
</feature>
<feature type="transmembrane region" description="Helical; Signal-anchor for type III membrane protein" evidence="2">
    <location>
        <begin position="23"/>
        <end position="43"/>
    </location>
</feature>
<feature type="topological domain" description="Intravirion" evidence="2">
    <location>
        <begin position="44"/>
        <end position="97"/>
    </location>
</feature>
<feature type="region of interest" description="Disordered" evidence="3">
    <location>
        <begin position="60"/>
        <end position="88"/>
    </location>
</feature>
<feature type="compositionally biased region" description="Basic and acidic residues" evidence="3">
    <location>
        <begin position="71"/>
        <end position="80"/>
    </location>
</feature>
<feature type="site" description="Essential for channel activity, possibly by being protonated during channel activation, and by forming the channel gate and the selective filter" evidence="2">
    <location>
        <position position="37"/>
    </location>
</feature>
<feature type="site" description="Seems to be involved in pH gating" evidence="2">
    <location>
        <position position="41"/>
    </location>
</feature>
<feature type="site" description="Not phosphorylated">
    <location>
        <position position="71"/>
    </location>
</feature>
<feature type="modified residue" description="Phosphoserine; by host" evidence="2">
    <location>
        <position position="64"/>
    </location>
</feature>
<feature type="modified residue" description="Phosphoserine; by host" evidence="2">
    <location>
        <position position="82"/>
    </location>
</feature>
<feature type="modified residue" description="Phosphoserine; by host" evidence="1">
    <location>
        <position position="89"/>
    </location>
</feature>
<feature type="modified residue" description="Phosphoserine; by host" evidence="2">
    <location>
        <position position="93"/>
    </location>
</feature>
<feature type="lipid moiety-binding region" description="S-palmitoyl cysteine; by host" evidence="2">
    <location>
        <position position="50"/>
    </location>
</feature>
<feature type="glycosylation site" description="N-linked (GlcNAc...) asparagine; by host" evidence="2">
    <location>
        <position position="20"/>
    </location>
</feature>
<feature type="disulfide bond" description="Interchain (with C-17)" evidence="2">
    <location>
        <position position="17"/>
    </location>
</feature>
<feature type="disulfide bond" description="Interchain (with C-19)" evidence="2">
    <location>
        <position position="19"/>
    </location>
</feature>
<feature type="helix" evidence="6">
    <location>
        <begin position="25"/>
        <end position="45"/>
    </location>
</feature>
<feature type="turn" evidence="5">
    <location>
        <begin position="47"/>
        <end position="49"/>
    </location>
</feature>
<feature type="helix" evidence="4">
    <location>
        <begin position="51"/>
        <end position="58"/>
    </location>
</feature>
<evidence type="ECO:0000250" key="1">
    <source>
        <dbReference type="UniProtKB" id="P0DOF8"/>
    </source>
</evidence>
<evidence type="ECO:0000255" key="2">
    <source>
        <dbReference type="HAMAP-Rule" id="MF_04069"/>
    </source>
</evidence>
<evidence type="ECO:0000256" key="3">
    <source>
        <dbReference type="SAM" id="MobiDB-lite"/>
    </source>
</evidence>
<evidence type="ECO:0007829" key="4">
    <source>
        <dbReference type="PDB" id="2KIH"/>
    </source>
</evidence>
<evidence type="ECO:0007829" key="5">
    <source>
        <dbReference type="PDB" id="2KWX"/>
    </source>
</evidence>
<evidence type="ECO:0007829" key="6">
    <source>
        <dbReference type="PDB" id="4QK7"/>
    </source>
</evidence>
<sequence length="97" mass="11186">MSLLTEVETPIRNEWGCRCNDSSDPLVVAASIIGILHLILWILDRLFFKCIYRFFEHGLKRGPSTEGVPESMREEYRKEQQSAVDADDSHFVSIELE</sequence>
<name>M2_I72A2</name>